<comment type="subcellular location">
    <subcellularLocation>
        <location>Mitochondrion</location>
    </subcellularLocation>
</comment>
<comment type="similarity">
    <text evidence="2">Belongs to the universal ribosomal protein uS3 family.</text>
</comment>
<reference key="1">
    <citation type="journal article" date="1994" name="Plant Mol. Biol.">
        <title>Rps3 and rpl16 genes do not overlap in Oenothera mitochondria: GTG as a potential translation initiation codon in plant mitochondria?</title>
        <authorList>
            <person name="Bock H."/>
            <person name="Brennicke A."/>
            <person name="Schuster W."/>
        </authorList>
    </citation>
    <scope>NUCLEOTIDE SEQUENCE [GENOMIC DNA]</scope>
</reference>
<reference key="2">
    <citation type="submission" date="1991-07" db="EMBL/GenBank/DDBJ databases">
        <authorList>
            <person name="Schuster W."/>
            <person name="Brennicke A."/>
        </authorList>
    </citation>
    <scope>NUCLEOTIDE SEQUENCE [GENOMIC DNA] OF 1-24</scope>
</reference>
<keyword id="KW-0496">Mitochondrion</keyword>
<keyword id="KW-0687">Ribonucleoprotein</keyword>
<keyword id="KW-0689">Ribosomal protein</keyword>
<sequence length="550" mass="63427">MARKGNPISVRLDLNRSSDSSWFSDYYYGKSVYQDVNLRSYFGSIRPPTRLTFGFRLGRCIILHFPKRTFIHFFLPRRPRRLKRGKKSRPGKEKARWWEFGKVGPIGCLHSNDDTEEERNEVGGRGAGKRVESIRLDDREKQNEIRIWPKKKQGYGYHDRSPSIKKNLSKSLRVSGAFKHPKYAGVLNDIAFLIENDDSFRKTKLFKFFFPKKSRSDGPTSHLLKRTPPAVRPSLNYSVMQYYLNTKNQMHFDPLVVLNHFVAPGVAEPSTMGGANRQGRSNELRIRSRIAFFVESSTSEKKSLAEDKKGLPHFIRQENDLRFAGRTKTTISLFPFFGATFFFPRDGVGVYKHLFFEDAREQLLGQLRIKCWKLMGKDKVMELIEKFIDLGGIGELIKGIEIMIEIILRNRRIPYGYNSYLNEVKKMRSLLSNRTKTNTIIESVKIKSVYQSASPIAQDISFQPRNKRRSFRSIFSQIVKDIPLVMKKGVEGIRICCSGRSKGAEIARTECGKYGKTSRNVFNQKIDYAPAEVSTRYGILGVKVWISYSK</sequence>
<protein>
    <recommendedName>
        <fullName evidence="2">Small ribosomal subunit protein uS3m</fullName>
    </recommendedName>
    <alternativeName>
        <fullName>Ribosomal protein S3, mitochondrial</fullName>
    </alternativeName>
</protein>
<organism>
    <name type="scientific">Oenothera berteroana</name>
    <name type="common">Bertero's evening primrose</name>
    <dbReference type="NCBI Taxonomy" id="3950"/>
    <lineage>
        <taxon>Eukaryota</taxon>
        <taxon>Viridiplantae</taxon>
        <taxon>Streptophyta</taxon>
        <taxon>Embryophyta</taxon>
        <taxon>Tracheophyta</taxon>
        <taxon>Spermatophyta</taxon>
        <taxon>Magnoliopsida</taxon>
        <taxon>eudicotyledons</taxon>
        <taxon>Gunneridae</taxon>
        <taxon>Pentapetalae</taxon>
        <taxon>rosids</taxon>
        <taxon>malvids</taxon>
        <taxon>Myrtales</taxon>
        <taxon>Onagraceae</taxon>
        <taxon>Onagroideae</taxon>
        <taxon>Onagreae</taxon>
        <taxon>Oenothera</taxon>
    </lineage>
</organism>
<feature type="chain" id="PRO_0000130315" description="Small ribosomal subunit protein uS3m">
    <location>
        <begin position="1"/>
        <end position="550"/>
    </location>
</feature>
<feature type="region of interest" description="Disordered" evidence="1">
    <location>
        <begin position="112"/>
        <end position="133"/>
    </location>
</feature>
<dbReference type="EMBL" id="X69140">
    <property type="protein sequence ID" value="CAA48894.1"/>
    <property type="molecule type" value="Genomic_DNA"/>
</dbReference>
<dbReference type="EMBL" id="X61030">
    <property type="protein sequence ID" value="CAA43365.1"/>
    <property type="molecule type" value="Genomic_DNA"/>
</dbReference>
<dbReference type="SMR" id="P27754"/>
<dbReference type="GO" id="GO:0005739">
    <property type="term" value="C:mitochondrion"/>
    <property type="evidence" value="ECO:0007669"/>
    <property type="project" value="UniProtKB-SubCell"/>
</dbReference>
<dbReference type="GO" id="GO:1990904">
    <property type="term" value="C:ribonucleoprotein complex"/>
    <property type="evidence" value="ECO:0007669"/>
    <property type="project" value="UniProtKB-KW"/>
</dbReference>
<dbReference type="GO" id="GO:0005840">
    <property type="term" value="C:ribosome"/>
    <property type="evidence" value="ECO:0007669"/>
    <property type="project" value="UniProtKB-KW"/>
</dbReference>
<dbReference type="GO" id="GO:0003723">
    <property type="term" value="F:RNA binding"/>
    <property type="evidence" value="ECO:0007669"/>
    <property type="project" value="InterPro"/>
</dbReference>
<dbReference type="GO" id="GO:0003735">
    <property type="term" value="F:structural constituent of ribosome"/>
    <property type="evidence" value="ECO:0007669"/>
    <property type="project" value="InterPro"/>
</dbReference>
<dbReference type="GO" id="GO:0006412">
    <property type="term" value="P:translation"/>
    <property type="evidence" value="ECO:0007669"/>
    <property type="project" value="InterPro"/>
</dbReference>
<dbReference type="FunFam" id="3.30.1140.32:FF:000008">
    <property type="entry name" value="Ribosomal protein S3"/>
    <property type="match status" value="1"/>
</dbReference>
<dbReference type="Gene3D" id="3.30.1140.32">
    <property type="entry name" value="Ribosomal protein S3, C-terminal domain"/>
    <property type="match status" value="1"/>
</dbReference>
<dbReference type="InterPro" id="IPR009019">
    <property type="entry name" value="KH_sf_prok-type"/>
</dbReference>
<dbReference type="InterPro" id="IPR036419">
    <property type="entry name" value="Ribosomal_S3_C_sf"/>
</dbReference>
<dbReference type="InterPro" id="IPR001351">
    <property type="entry name" value="Ribosomal_uS3_C"/>
</dbReference>
<dbReference type="InterPro" id="IPR018280">
    <property type="entry name" value="Ribosomal_uS3_CS"/>
</dbReference>
<dbReference type="InterPro" id="IPR044954">
    <property type="entry name" value="Ribosomal_uS3m_plant"/>
</dbReference>
<dbReference type="PANTHER" id="PTHR35928">
    <property type="entry name" value="RIBOSOMAL PROTEIN S3, MITOCHONDRIAL"/>
    <property type="match status" value="1"/>
</dbReference>
<dbReference type="PANTHER" id="PTHR35928:SF2">
    <property type="entry name" value="SMALL RIBOSOMAL SUBUNIT PROTEIN US3M"/>
    <property type="match status" value="1"/>
</dbReference>
<dbReference type="Pfam" id="PF00189">
    <property type="entry name" value="Ribosomal_S3_C"/>
    <property type="match status" value="1"/>
</dbReference>
<dbReference type="SUPFAM" id="SSF54814">
    <property type="entry name" value="Prokaryotic type KH domain (KH-domain type II)"/>
    <property type="match status" value="1"/>
</dbReference>
<dbReference type="SUPFAM" id="SSF54821">
    <property type="entry name" value="Ribosomal protein S3 C-terminal domain"/>
    <property type="match status" value="1"/>
</dbReference>
<dbReference type="PROSITE" id="PS00548">
    <property type="entry name" value="RIBOSOMAL_S3"/>
    <property type="match status" value="1"/>
</dbReference>
<gene>
    <name type="primary">RPS3</name>
</gene>
<accession>P27754</accession>
<proteinExistence type="inferred from homology"/>
<evidence type="ECO:0000256" key="1">
    <source>
        <dbReference type="SAM" id="MobiDB-lite"/>
    </source>
</evidence>
<evidence type="ECO:0000305" key="2"/>
<name>RT03_OENBE</name>
<geneLocation type="mitochondrion"/>